<accession>B1YRD5</accession>
<comment type="function">
    <text evidence="1">This protein binds specifically to 23S rRNA; its binding is stimulated by other ribosomal proteins, e.g. L4, L17, and L20. It is important during the early stages of 50S assembly. It makes multiple contacts with different domains of the 23S rRNA in the assembled 50S subunit and ribosome (By similarity).</text>
</comment>
<comment type="function">
    <text evidence="1">The globular domain of the protein is located near the polypeptide exit tunnel on the outside of the subunit, while an extended beta-hairpin is found that lines the wall of the exit tunnel in the center of the 70S ribosome.</text>
</comment>
<comment type="subunit">
    <text evidence="1">Part of the 50S ribosomal subunit.</text>
</comment>
<comment type="similarity">
    <text evidence="1">Belongs to the universal ribosomal protein uL22 family.</text>
</comment>
<name>RL22_BURA4</name>
<keyword id="KW-0687">Ribonucleoprotein</keyword>
<keyword id="KW-0689">Ribosomal protein</keyword>
<keyword id="KW-0694">RNA-binding</keyword>
<keyword id="KW-0699">rRNA-binding</keyword>
<reference key="1">
    <citation type="submission" date="2008-04" db="EMBL/GenBank/DDBJ databases">
        <title>Complete sequence of chromosome 1 of Burkholderia ambifaria MC40-6.</title>
        <authorList>
            <person name="Copeland A."/>
            <person name="Lucas S."/>
            <person name="Lapidus A."/>
            <person name="Glavina del Rio T."/>
            <person name="Dalin E."/>
            <person name="Tice H."/>
            <person name="Pitluck S."/>
            <person name="Chain P."/>
            <person name="Malfatti S."/>
            <person name="Shin M."/>
            <person name="Vergez L."/>
            <person name="Lang D."/>
            <person name="Schmutz J."/>
            <person name="Larimer F."/>
            <person name="Land M."/>
            <person name="Hauser L."/>
            <person name="Kyrpides N."/>
            <person name="Lykidis A."/>
            <person name="Ramette A."/>
            <person name="Konstantinidis K."/>
            <person name="Tiedje J."/>
            <person name="Richardson P."/>
        </authorList>
    </citation>
    <scope>NUCLEOTIDE SEQUENCE [LARGE SCALE GENOMIC DNA]</scope>
    <source>
        <strain>MC40-6</strain>
    </source>
</reference>
<protein>
    <recommendedName>
        <fullName evidence="1">Large ribosomal subunit protein uL22</fullName>
    </recommendedName>
    <alternativeName>
        <fullName evidence="2">50S ribosomal protein L22</fullName>
    </alternativeName>
</protein>
<sequence>MEVKAIHRGARISAQKTRLVADQIRGLPVDKALNVLTFSPKKAAGIVKKVVLSAIANAEHNEGADIDELKIKSIYVDKAASLKRFTARAKGRGNRIEKQSCHITVTVGN</sequence>
<organism>
    <name type="scientific">Burkholderia ambifaria (strain MC40-6)</name>
    <dbReference type="NCBI Taxonomy" id="398577"/>
    <lineage>
        <taxon>Bacteria</taxon>
        <taxon>Pseudomonadati</taxon>
        <taxon>Pseudomonadota</taxon>
        <taxon>Betaproteobacteria</taxon>
        <taxon>Burkholderiales</taxon>
        <taxon>Burkholderiaceae</taxon>
        <taxon>Burkholderia</taxon>
        <taxon>Burkholderia cepacia complex</taxon>
    </lineage>
</organism>
<evidence type="ECO:0000255" key="1">
    <source>
        <dbReference type="HAMAP-Rule" id="MF_01331"/>
    </source>
</evidence>
<evidence type="ECO:0000305" key="2"/>
<feature type="chain" id="PRO_1000142238" description="Large ribosomal subunit protein uL22">
    <location>
        <begin position="1"/>
        <end position="109"/>
    </location>
</feature>
<dbReference type="EMBL" id="CP001025">
    <property type="protein sequence ID" value="ACB62782.1"/>
    <property type="molecule type" value="Genomic_DNA"/>
</dbReference>
<dbReference type="RefSeq" id="WP_004199272.1">
    <property type="nucleotide sequence ID" value="NC_010551.1"/>
</dbReference>
<dbReference type="SMR" id="B1YRD5"/>
<dbReference type="GeneID" id="98107155"/>
<dbReference type="KEGG" id="bac:BamMC406_0281"/>
<dbReference type="HOGENOM" id="CLU_083987_3_3_4"/>
<dbReference type="OrthoDB" id="9805969at2"/>
<dbReference type="Proteomes" id="UP000001680">
    <property type="component" value="Chromosome 1"/>
</dbReference>
<dbReference type="GO" id="GO:0022625">
    <property type="term" value="C:cytosolic large ribosomal subunit"/>
    <property type="evidence" value="ECO:0007669"/>
    <property type="project" value="TreeGrafter"/>
</dbReference>
<dbReference type="GO" id="GO:0019843">
    <property type="term" value="F:rRNA binding"/>
    <property type="evidence" value="ECO:0007669"/>
    <property type="project" value="UniProtKB-UniRule"/>
</dbReference>
<dbReference type="GO" id="GO:0003735">
    <property type="term" value="F:structural constituent of ribosome"/>
    <property type="evidence" value="ECO:0007669"/>
    <property type="project" value="InterPro"/>
</dbReference>
<dbReference type="GO" id="GO:0006412">
    <property type="term" value="P:translation"/>
    <property type="evidence" value="ECO:0007669"/>
    <property type="project" value="UniProtKB-UniRule"/>
</dbReference>
<dbReference type="CDD" id="cd00336">
    <property type="entry name" value="Ribosomal_L22"/>
    <property type="match status" value="1"/>
</dbReference>
<dbReference type="FunFam" id="3.90.470.10:FF:000001">
    <property type="entry name" value="50S ribosomal protein L22"/>
    <property type="match status" value="1"/>
</dbReference>
<dbReference type="Gene3D" id="3.90.470.10">
    <property type="entry name" value="Ribosomal protein L22/L17"/>
    <property type="match status" value="1"/>
</dbReference>
<dbReference type="HAMAP" id="MF_01331_B">
    <property type="entry name" value="Ribosomal_uL22_B"/>
    <property type="match status" value="1"/>
</dbReference>
<dbReference type="InterPro" id="IPR001063">
    <property type="entry name" value="Ribosomal_uL22"/>
</dbReference>
<dbReference type="InterPro" id="IPR005727">
    <property type="entry name" value="Ribosomal_uL22_bac/chlpt-type"/>
</dbReference>
<dbReference type="InterPro" id="IPR047867">
    <property type="entry name" value="Ribosomal_uL22_bac/org-type"/>
</dbReference>
<dbReference type="InterPro" id="IPR018260">
    <property type="entry name" value="Ribosomal_uL22_CS"/>
</dbReference>
<dbReference type="InterPro" id="IPR036394">
    <property type="entry name" value="Ribosomal_uL22_sf"/>
</dbReference>
<dbReference type="NCBIfam" id="TIGR01044">
    <property type="entry name" value="rplV_bact"/>
    <property type="match status" value="1"/>
</dbReference>
<dbReference type="PANTHER" id="PTHR13501">
    <property type="entry name" value="CHLOROPLAST 50S RIBOSOMAL PROTEIN L22-RELATED"/>
    <property type="match status" value="1"/>
</dbReference>
<dbReference type="PANTHER" id="PTHR13501:SF8">
    <property type="entry name" value="LARGE RIBOSOMAL SUBUNIT PROTEIN UL22M"/>
    <property type="match status" value="1"/>
</dbReference>
<dbReference type="Pfam" id="PF00237">
    <property type="entry name" value="Ribosomal_L22"/>
    <property type="match status" value="1"/>
</dbReference>
<dbReference type="SUPFAM" id="SSF54843">
    <property type="entry name" value="Ribosomal protein L22"/>
    <property type="match status" value="1"/>
</dbReference>
<dbReference type="PROSITE" id="PS00464">
    <property type="entry name" value="RIBOSOMAL_L22"/>
    <property type="match status" value="1"/>
</dbReference>
<proteinExistence type="inferred from homology"/>
<gene>
    <name evidence="1" type="primary">rplV</name>
    <name type="ordered locus">BamMC406_0281</name>
</gene>